<name>PETG_LIRTU</name>
<keyword id="KW-0150">Chloroplast</keyword>
<keyword id="KW-0249">Electron transport</keyword>
<keyword id="KW-0472">Membrane</keyword>
<keyword id="KW-0602">Photosynthesis</keyword>
<keyword id="KW-0934">Plastid</keyword>
<keyword id="KW-0793">Thylakoid</keyword>
<keyword id="KW-0812">Transmembrane</keyword>
<keyword id="KW-1133">Transmembrane helix</keyword>
<keyword id="KW-0813">Transport</keyword>
<comment type="function">
    <text evidence="1">Component of the cytochrome b6-f complex, which mediates electron transfer between photosystem II (PSII) and photosystem I (PSI), cyclic electron flow around PSI, and state transitions. PetG is required for either the stability or assembly of the cytochrome b6-f complex.</text>
</comment>
<comment type="subunit">
    <text evidence="1">The 4 large subunits of the cytochrome b6-f complex are cytochrome b6, subunit IV (17 kDa polypeptide, PetD), cytochrome f and the Rieske protein, while the 4 small subunits are PetG, PetL, PetM and PetN. The complex functions as a dimer.</text>
</comment>
<comment type="subcellular location">
    <subcellularLocation>
        <location evidence="1">Plastid</location>
        <location evidence="1">Chloroplast thylakoid membrane</location>
        <topology evidence="1">Single-pass membrane protein</topology>
    </subcellularLocation>
</comment>
<comment type="similarity">
    <text evidence="1">Belongs to the PetG family.</text>
</comment>
<proteinExistence type="inferred from homology"/>
<evidence type="ECO:0000255" key="1">
    <source>
        <dbReference type="HAMAP-Rule" id="MF_00432"/>
    </source>
</evidence>
<feature type="chain" id="PRO_0000275495" description="Cytochrome b6-f complex subunit 5">
    <location>
        <begin position="1"/>
        <end position="37"/>
    </location>
</feature>
<feature type="transmembrane region" description="Helical" evidence="1">
    <location>
        <begin position="5"/>
        <end position="25"/>
    </location>
</feature>
<protein>
    <recommendedName>
        <fullName evidence="1">Cytochrome b6-f complex subunit 5</fullName>
    </recommendedName>
    <alternativeName>
        <fullName evidence="1">Cytochrome b6-f complex subunit PetG</fullName>
    </alternativeName>
    <alternativeName>
        <fullName evidence="1">Cytochrome b6-f complex subunit V</fullName>
    </alternativeName>
</protein>
<gene>
    <name evidence="1" type="primary">petG</name>
</gene>
<organism>
    <name type="scientific">Liriodendron tulipifera</name>
    <name type="common">Tuliptree</name>
    <name type="synonym">Tulip poplar</name>
    <dbReference type="NCBI Taxonomy" id="3415"/>
    <lineage>
        <taxon>Eukaryota</taxon>
        <taxon>Viridiplantae</taxon>
        <taxon>Streptophyta</taxon>
        <taxon>Embryophyta</taxon>
        <taxon>Tracheophyta</taxon>
        <taxon>Spermatophyta</taxon>
        <taxon>Magnoliopsida</taxon>
        <taxon>Magnoliidae</taxon>
        <taxon>Magnoliales</taxon>
        <taxon>Magnoliaceae</taxon>
        <taxon>Liriodendron</taxon>
    </lineage>
</organism>
<geneLocation type="chloroplast"/>
<dbReference type="EMBL" id="DQ899947">
    <property type="protein sequence ID" value="ABI32528.1"/>
    <property type="molecule type" value="Genomic_DNA"/>
</dbReference>
<dbReference type="RefSeq" id="YP_740221.1">
    <property type="nucleotide sequence ID" value="NC_008326.1"/>
</dbReference>
<dbReference type="SMR" id="Q0G9K0"/>
<dbReference type="GeneID" id="4266643"/>
<dbReference type="GO" id="GO:0009535">
    <property type="term" value="C:chloroplast thylakoid membrane"/>
    <property type="evidence" value="ECO:0007669"/>
    <property type="project" value="UniProtKB-SubCell"/>
</dbReference>
<dbReference type="GO" id="GO:0009512">
    <property type="term" value="C:cytochrome b6f complex"/>
    <property type="evidence" value="ECO:0007669"/>
    <property type="project" value="InterPro"/>
</dbReference>
<dbReference type="GO" id="GO:0045158">
    <property type="term" value="F:electron transporter, transferring electrons within cytochrome b6/f complex of photosystem II activity"/>
    <property type="evidence" value="ECO:0007669"/>
    <property type="project" value="UniProtKB-UniRule"/>
</dbReference>
<dbReference type="GO" id="GO:0017004">
    <property type="term" value="P:cytochrome complex assembly"/>
    <property type="evidence" value="ECO:0007669"/>
    <property type="project" value="UniProtKB-UniRule"/>
</dbReference>
<dbReference type="GO" id="GO:0015979">
    <property type="term" value="P:photosynthesis"/>
    <property type="evidence" value="ECO:0007669"/>
    <property type="project" value="UniProtKB-KW"/>
</dbReference>
<dbReference type="HAMAP" id="MF_00432">
    <property type="entry name" value="Cytb6_f_PetG"/>
    <property type="match status" value="1"/>
</dbReference>
<dbReference type="InterPro" id="IPR003683">
    <property type="entry name" value="Cyt_6/f_cplx_su5"/>
</dbReference>
<dbReference type="InterPro" id="IPR036099">
    <property type="entry name" value="Cyt_6/f_cplx_su5_sf"/>
</dbReference>
<dbReference type="NCBIfam" id="NF001907">
    <property type="entry name" value="PRK00665.1"/>
    <property type="match status" value="1"/>
</dbReference>
<dbReference type="Pfam" id="PF02529">
    <property type="entry name" value="PetG"/>
    <property type="match status" value="1"/>
</dbReference>
<dbReference type="PIRSF" id="PIRSF000034">
    <property type="entry name" value="Cyt_b6-f_V"/>
    <property type="match status" value="1"/>
</dbReference>
<dbReference type="SUPFAM" id="SSF103446">
    <property type="entry name" value="PetG subunit of the cytochrome b6f complex"/>
    <property type="match status" value="1"/>
</dbReference>
<accession>Q0G9K0</accession>
<reference key="1">
    <citation type="journal article" date="2006" name="BMC Evol. Biol.">
        <title>Complete plastid genome sequences of Drimys, Liriodendron, and Piper: implications for the phylogenetic relationships of magnoliids.</title>
        <authorList>
            <person name="Cai Z."/>
            <person name="Penaflor C."/>
            <person name="Kuehl J.V."/>
            <person name="Leebens-Mack J."/>
            <person name="Carlson J.E."/>
            <person name="dePamphilis C.W."/>
            <person name="Boore J.L."/>
            <person name="Jansen R.K."/>
        </authorList>
    </citation>
    <scope>NUCLEOTIDE SEQUENCE [LARGE SCALE GENOMIC DNA]</scope>
</reference>
<sequence>MIEVFLFGIVLGLIPITLAGLFVTAYLQYRRGDQLDL</sequence>